<geneLocation type="mitochondrion"/>
<gene>
    <name type="primary">mrps19</name>
    <name type="synonym">rps19</name>
</gene>
<name>RT19_DICCI</name>
<feature type="chain" id="PRO_0000312402" description="Small ribosomal subunit protein uS19m">
    <location>
        <begin position="1"/>
        <end position="87"/>
    </location>
</feature>
<reference key="1">
    <citation type="journal article" date="2008" name="Mol. Biol. Evol.">
        <title>Mitochondrial genome evolution in the social amoebae.</title>
        <authorList>
            <person name="Heidel A.J."/>
            <person name="Gloeckner G."/>
        </authorList>
    </citation>
    <scope>NUCLEOTIDE SEQUENCE [LARGE SCALE GENOMIC DNA]</scope>
</reference>
<accession>P0C5Y2</accession>
<accession>B2VQ34</accession>
<evidence type="ECO:0000305" key="1"/>
<keyword id="KW-0496">Mitochondrion</keyword>
<keyword id="KW-0687">Ribonucleoprotein</keyword>
<keyword id="KW-0689">Ribosomal protein</keyword>
<comment type="subcellular location">
    <subcellularLocation>
        <location>Mitochondrion</location>
    </subcellularLocation>
</comment>
<comment type="similarity">
    <text evidence="1">Belongs to the universal ribosomal protein uS19 family.</text>
</comment>
<organism>
    <name type="scientific">Dictyostelium citrinum</name>
    <name type="common">Slime mold</name>
    <dbReference type="NCBI Taxonomy" id="361072"/>
    <lineage>
        <taxon>Eukaryota</taxon>
        <taxon>Amoebozoa</taxon>
        <taxon>Evosea</taxon>
        <taxon>Eumycetozoa</taxon>
        <taxon>Dictyostelia</taxon>
        <taxon>Dictyosteliales</taxon>
        <taxon>Dictyosteliaceae</taxon>
        <taxon>Dictyostelium</taxon>
    </lineage>
</organism>
<proteinExistence type="inferred from homology"/>
<dbReference type="EMBL" id="DQ336395">
    <property type="protein sequence ID" value="ACD12718.1"/>
    <property type="molecule type" value="Genomic_DNA"/>
</dbReference>
<dbReference type="RefSeq" id="YP_003579819.1">
    <property type="nucleotide sequence ID" value="NC_007787.2"/>
</dbReference>
<dbReference type="SMR" id="P0C5Y2"/>
<dbReference type="GeneID" id="9086855"/>
<dbReference type="GO" id="GO:0005739">
    <property type="term" value="C:mitochondrion"/>
    <property type="evidence" value="ECO:0007669"/>
    <property type="project" value="UniProtKB-SubCell"/>
</dbReference>
<dbReference type="GO" id="GO:1990904">
    <property type="term" value="C:ribonucleoprotein complex"/>
    <property type="evidence" value="ECO:0007669"/>
    <property type="project" value="UniProtKB-KW"/>
</dbReference>
<dbReference type="GO" id="GO:0005840">
    <property type="term" value="C:ribosome"/>
    <property type="evidence" value="ECO:0007669"/>
    <property type="project" value="UniProtKB-KW"/>
</dbReference>
<dbReference type="GO" id="GO:0003723">
    <property type="term" value="F:RNA binding"/>
    <property type="evidence" value="ECO:0007669"/>
    <property type="project" value="InterPro"/>
</dbReference>
<dbReference type="GO" id="GO:0003735">
    <property type="term" value="F:structural constituent of ribosome"/>
    <property type="evidence" value="ECO:0007669"/>
    <property type="project" value="InterPro"/>
</dbReference>
<dbReference type="GO" id="GO:0006412">
    <property type="term" value="P:translation"/>
    <property type="evidence" value="ECO:0007669"/>
    <property type="project" value="InterPro"/>
</dbReference>
<dbReference type="Gene3D" id="3.30.860.10">
    <property type="entry name" value="30s Ribosomal Protein S19, Chain A"/>
    <property type="match status" value="1"/>
</dbReference>
<dbReference type="HAMAP" id="MF_00531">
    <property type="entry name" value="Ribosomal_uS19"/>
    <property type="match status" value="1"/>
</dbReference>
<dbReference type="InterPro" id="IPR002222">
    <property type="entry name" value="Ribosomal_uS19"/>
</dbReference>
<dbReference type="InterPro" id="IPR020934">
    <property type="entry name" value="Ribosomal_uS19_CS"/>
</dbReference>
<dbReference type="InterPro" id="IPR023575">
    <property type="entry name" value="Ribosomal_uS19_SF"/>
</dbReference>
<dbReference type="Pfam" id="PF00203">
    <property type="entry name" value="Ribosomal_S19"/>
    <property type="match status" value="1"/>
</dbReference>
<dbReference type="PIRSF" id="PIRSF002144">
    <property type="entry name" value="Ribosomal_S19"/>
    <property type="match status" value="1"/>
</dbReference>
<dbReference type="PRINTS" id="PR00975">
    <property type="entry name" value="RIBOSOMALS19"/>
</dbReference>
<dbReference type="SUPFAM" id="SSF54570">
    <property type="entry name" value="Ribosomal protein S19"/>
    <property type="match status" value="1"/>
</dbReference>
<dbReference type="PROSITE" id="PS00323">
    <property type="entry name" value="RIBOSOMAL_S19"/>
    <property type="match status" value="1"/>
</dbReference>
<protein>
    <recommendedName>
        <fullName evidence="1">Small ribosomal subunit protein uS19m</fullName>
    </recommendedName>
    <alternativeName>
        <fullName>Ribosomal protein S19, mitochondrial</fullName>
    </alternativeName>
</protein>
<sequence>MVRSRWKGIYVAKELQNYNTVSNPTIVTTERSSVIIPYYLSKTIYVYNGRKYVGVKITEKSLGRKLGEYVLTKKVEKYKASKKVKKK</sequence>